<sequence length="425" mass="44949">MAEIMHVFAREILDSRGNPTVEAEVFLDDGSHGVAGVPSGASTGVHEAHELRDGGDRYLGKGVLKAVENVNEEIGDELAGLEADDQRLIDEAMIKLDGTANKSRLGANAILGVSMAVAKAAADSAGLPLFRYIGGPNAHVLPVPMMNIINGGAHADSGVDVQEFMIAPIGAETFSEALRNGAEVYHALKSVIKEKGLSTGLGDEGGFAPSVGSTREALDLIVEAIEKAGFTPGKDIALALDVASSEFFKDGTYHFEGGQHSAAEMANVYAELVDAYPIVSIEDPLQEDDWEGYTNLTATIGDKVQIVGDDFFVTNPERLKEGIAKKAANSILVKVNQIGTLTETFDAVDMAHRAGYTSMMSHRSGETEDTTIADLAVALNCGQIKTGAPARSDRVAKYNQLLRIEQLLGDAGVYAGRSAFPRFQG</sequence>
<protein>
    <recommendedName>
        <fullName evidence="1">Enolase</fullName>
        <ecNumber evidence="1">4.2.1.11</ecNumber>
    </recommendedName>
    <alternativeName>
        <fullName evidence="1">2-phospho-D-glycerate hydro-lyase</fullName>
    </alternativeName>
    <alternativeName>
        <fullName evidence="1">2-phosphoglycerate dehydratase</fullName>
    </alternativeName>
</protein>
<feature type="chain" id="PRO_0000133876" description="Enolase">
    <location>
        <begin position="1"/>
        <end position="425"/>
    </location>
</feature>
<feature type="active site" description="Proton donor" evidence="1">
    <location>
        <position position="204"/>
    </location>
</feature>
<feature type="active site" description="Proton acceptor" evidence="1">
    <location>
        <position position="334"/>
    </location>
</feature>
<feature type="binding site" evidence="1">
    <location>
        <position position="162"/>
    </location>
    <ligand>
        <name>(2R)-2-phosphoglycerate</name>
        <dbReference type="ChEBI" id="CHEBI:58289"/>
    </ligand>
</feature>
<feature type="binding site" evidence="1">
    <location>
        <position position="241"/>
    </location>
    <ligand>
        <name>Mg(2+)</name>
        <dbReference type="ChEBI" id="CHEBI:18420"/>
    </ligand>
</feature>
<feature type="binding site" evidence="1">
    <location>
        <position position="282"/>
    </location>
    <ligand>
        <name>Mg(2+)</name>
        <dbReference type="ChEBI" id="CHEBI:18420"/>
    </ligand>
</feature>
<feature type="binding site" evidence="1">
    <location>
        <position position="309"/>
    </location>
    <ligand>
        <name>Mg(2+)</name>
        <dbReference type="ChEBI" id="CHEBI:18420"/>
    </ligand>
</feature>
<feature type="binding site" evidence="1">
    <location>
        <position position="334"/>
    </location>
    <ligand>
        <name>(2R)-2-phosphoglycerate</name>
        <dbReference type="ChEBI" id="CHEBI:58289"/>
    </ligand>
</feature>
<feature type="binding site" evidence="1">
    <location>
        <position position="363"/>
    </location>
    <ligand>
        <name>(2R)-2-phosphoglycerate</name>
        <dbReference type="ChEBI" id="CHEBI:58289"/>
    </ligand>
</feature>
<feature type="binding site" evidence="1">
    <location>
        <position position="364"/>
    </location>
    <ligand>
        <name>(2R)-2-phosphoglycerate</name>
        <dbReference type="ChEBI" id="CHEBI:58289"/>
    </ligand>
</feature>
<feature type="binding site" evidence="1">
    <location>
        <position position="385"/>
    </location>
    <ligand>
        <name>(2R)-2-phosphoglycerate</name>
        <dbReference type="ChEBI" id="CHEBI:58289"/>
    </ligand>
</feature>
<reference key="1">
    <citation type="journal article" date="2003" name="Appl. Microbiol. Biotechnol.">
        <title>The Corynebacterium glutamicum genome: features and impacts on biotechnological processes.</title>
        <authorList>
            <person name="Ikeda M."/>
            <person name="Nakagawa S."/>
        </authorList>
    </citation>
    <scope>NUCLEOTIDE SEQUENCE [LARGE SCALE GENOMIC DNA]</scope>
    <source>
        <strain>ATCC 13032 / DSM 20300 / JCM 1318 / BCRC 11384 / CCUG 27702 / LMG 3730 / NBRC 12168 / NCIMB 10025 / NRRL B-2784 / 534</strain>
    </source>
</reference>
<reference key="2">
    <citation type="journal article" date="2003" name="J. Biotechnol.">
        <title>The complete Corynebacterium glutamicum ATCC 13032 genome sequence and its impact on the production of L-aspartate-derived amino acids and vitamins.</title>
        <authorList>
            <person name="Kalinowski J."/>
            <person name="Bathe B."/>
            <person name="Bartels D."/>
            <person name="Bischoff N."/>
            <person name="Bott M."/>
            <person name="Burkovski A."/>
            <person name="Dusch N."/>
            <person name="Eggeling L."/>
            <person name="Eikmanns B.J."/>
            <person name="Gaigalat L."/>
            <person name="Goesmann A."/>
            <person name="Hartmann M."/>
            <person name="Huthmacher K."/>
            <person name="Kraemer R."/>
            <person name="Linke B."/>
            <person name="McHardy A.C."/>
            <person name="Meyer F."/>
            <person name="Moeckel B."/>
            <person name="Pfefferle W."/>
            <person name="Puehler A."/>
            <person name="Rey D.A."/>
            <person name="Rueckert C."/>
            <person name="Rupp O."/>
            <person name="Sahm H."/>
            <person name="Wendisch V.F."/>
            <person name="Wiegraebe I."/>
            <person name="Tauch A."/>
        </authorList>
    </citation>
    <scope>NUCLEOTIDE SEQUENCE [LARGE SCALE GENOMIC DNA]</scope>
    <source>
        <strain>ATCC 13032 / DSM 20300 / JCM 1318 / BCRC 11384 / CCUG 27702 / LMG 3730 / NBRC 12168 / NCIMB 10025 / NRRL B-2784 / 534</strain>
    </source>
</reference>
<accession>Q8NRS1</accession>
<evidence type="ECO:0000255" key="1">
    <source>
        <dbReference type="HAMAP-Rule" id="MF_00318"/>
    </source>
</evidence>
<proteinExistence type="inferred from homology"/>
<dbReference type="EC" id="4.2.1.11" evidence="1"/>
<dbReference type="EMBL" id="BA000036">
    <property type="protein sequence ID" value="BAB98367.1"/>
    <property type="molecule type" value="Genomic_DNA"/>
</dbReference>
<dbReference type="EMBL" id="BX927150">
    <property type="protein sequence ID" value="CAF19681.1"/>
    <property type="molecule type" value="Genomic_DNA"/>
</dbReference>
<dbReference type="RefSeq" id="NP_600201.1">
    <property type="nucleotide sequence ID" value="NC_003450.3"/>
</dbReference>
<dbReference type="RefSeq" id="WP_003856756.1">
    <property type="nucleotide sequence ID" value="NC_006958.1"/>
</dbReference>
<dbReference type="SMR" id="Q8NRS1"/>
<dbReference type="STRING" id="196627.cg1111"/>
<dbReference type="GeneID" id="1018964"/>
<dbReference type="KEGG" id="cgb:cg1111"/>
<dbReference type="KEGG" id="cgl:Cgl0974"/>
<dbReference type="PATRIC" id="fig|196627.13.peg.959"/>
<dbReference type="eggNOG" id="COG0148">
    <property type="taxonomic scope" value="Bacteria"/>
</dbReference>
<dbReference type="HOGENOM" id="CLU_031223_2_1_11"/>
<dbReference type="OrthoDB" id="9804716at2"/>
<dbReference type="BioCyc" id="CORYNE:G18NG-10545-MONOMER"/>
<dbReference type="UniPathway" id="UPA00109">
    <property type="reaction ID" value="UER00187"/>
</dbReference>
<dbReference type="Proteomes" id="UP000000582">
    <property type="component" value="Chromosome"/>
</dbReference>
<dbReference type="Proteomes" id="UP000001009">
    <property type="component" value="Chromosome"/>
</dbReference>
<dbReference type="GO" id="GO:0009986">
    <property type="term" value="C:cell surface"/>
    <property type="evidence" value="ECO:0007669"/>
    <property type="project" value="UniProtKB-SubCell"/>
</dbReference>
<dbReference type="GO" id="GO:0005576">
    <property type="term" value="C:extracellular region"/>
    <property type="evidence" value="ECO:0007669"/>
    <property type="project" value="UniProtKB-SubCell"/>
</dbReference>
<dbReference type="GO" id="GO:0000015">
    <property type="term" value="C:phosphopyruvate hydratase complex"/>
    <property type="evidence" value="ECO:0007669"/>
    <property type="project" value="InterPro"/>
</dbReference>
<dbReference type="GO" id="GO:0000287">
    <property type="term" value="F:magnesium ion binding"/>
    <property type="evidence" value="ECO:0007669"/>
    <property type="project" value="UniProtKB-UniRule"/>
</dbReference>
<dbReference type="GO" id="GO:0004634">
    <property type="term" value="F:phosphopyruvate hydratase activity"/>
    <property type="evidence" value="ECO:0007669"/>
    <property type="project" value="UniProtKB-UniRule"/>
</dbReference>
<dbReference type="GO" id="GO:0006096">
    <property type="term" value="P:glycolytic process"/>
    <property type="evidence" value="ECO:0007669"/>
    <property type="project" value="UniProtKB-UniRule"/>
</dbReference>
<dbReference type="CDD" id="cd03313">
    <property type="entry name" value="enolase"/>
    <property type="match status" value="1"/>
</dbReference>
<dbReference type="FunFam" id="3.20.20.120:FF:000001">
    <property type="entry name" value="Enolase"/>
    <property type="match status" value="1"/>
</dbReference>
<dbReference type="FunFam" id="3.30.390.10:FF:000001">
    <property type="entry name" value="Enolase"/>
    <property type="match status" value="1"/>
</dbReference>
<dbReference type="Gene3D" id="3.20.20.120">
    <property type="entry name" value="Enolase-like C-terminal domain"/>
    <property type="match status" value="1"/>
</dbReference>
<dbReference type="Gene3D" id="3.30.390.10">
    <property type="entry name" value="Enolase-like, N-terminal domain"/>
    <property type="match status" value="1"/>
</dbReference>
<dbReference type="HAMAP" id="MF_00318">
    <property type="entry name" value="Enolase"/>
    <property type="match status" value="1"/>
</dbReference>
<dbReference type="InterPro" id="IPR000941">
    <property type="entry name" value="Enolase"/>
</dbReference>
<dbReference type="InterPro" id="IPR036849">
    <property type="entry name" value="Enolase-like_C_sf"/>
</dbReference>
<dbReference type="InterPro" id="IPR029017">
    <property type="entry name" value="Enolase-like_N"/>
</dbReference>
<dbReference type="InterPro" id="IPR020810">
    <property type="entry name" value="Enolase_C"/>
</dbReference>
<dbReference type="InterPro" id="IPR020809">
    <property type="entry name" value="Enolase_CS"/>
</dbReference>
<dbReference type="InterPro" id="IPR020811">
    <property type="entry name" value="Enolase_N"/>
</dbReference>
<dbReference type="NCBIfam" id="TIGR01060">
    <property type="entry name" value="eno"/>
    <property type="match status" value="1"/>
</dbReference>
<dbReference type="PANTHER" id="PTHR11902">
    <property type="entry name" value="ENOLASE"/>
    <property type="match status" value="1"/>
</dbReference>
<dbReference type="PANTHER" id="PTHR11902:SF1">
    <property type="entry name" value="ENOLASE"/>
    <property type="match status" value="1"/>
</dbReference>
<dbReference type="Pfam" id="PF00113">
    <property type="entry name" value="Enolase_C"/>
    <property type="match status" value="1"/>
</dbReference>
<dbReference type="Pfam" id="PF03952">
    <property type="entry name" value="Enolase_N"/>
    <property type="match status" value="1"/>
</dbReference>
<dbReference type="PIRSF" id="PIRSF001400">
    <property type="entry name" value="Enolase"/>
    <property type="match status" value="1"/>
</dbReference>
<dbReference type="PRINTS" id="PR00148">
    <property type="entry name" value="ENOLASE"/>
</dbReference>
<dbReference type="SFLD" id="SFLDS00001">
    <property type="entry name" value="Enolase"/>
    <property type="match status" value="1"/>
</dbReference>
<dbReference type="SFLD" id="SFLDF00002">
    <property type="entry name" value="enolase"/>
    <property type="match status" value="1"/>
</dbReference>
<dbReference type="SMART" id="SM01192">
    <property type="entry name" value="Enolase_C"/>
    <property type="match status" value="1"/>
</dbReference>
<dbReference type="SMART" id="SM01193">
    <property type="entry name" value="Enolase_N"/>
    <property type="match status" value="1"/>
</dbReference>
<dbReference type="SUPFAM" id="SSF51604">
    <property type="entry name" value="Enolase C-terminal domain-like"/>
    <property type="match status" value="1"/>
</dbReference>
<dbReference type="SUPFAM" id="SSF54826">
    <property type="entry name" value="Enolase N-terminal domain-like"/>
    <property type="match status" value="1"/>
</dbReference>
<dbReference type="PROSITE" id="PS00164">
    <property type="entry name" value="ENOLASE"/>
    <property type="match status" value="1"/>
</dbReference>
<name>ENO_CORGL</name>
<keyword id="KW-0963">Cytoplasm</keyword>
<keyword id="KW-0324">Glycolysis</keyword>
<keyword id="KW-0456">Lyase</keyword>
<keyword id="KW-0460">Magnesium</keyword>
<keyword id="KW-0479">Metal-binding</keyword>
<keyword id="KW-1185">Reference proteome</keyword>
<keyword id="KW-0964">Secreted</keyword>
<organism>
    <name type="scientific">Corynebacterium glutamicum (strain ATCC 13032 / DSM 20300 / JCM 1318 / BCRC 11384 / CCUG 27702 / LMG 3730 / NBRC 12168 / NCIMB 10025 / NRRL B-2784 / 534)</name>
    <dbReference type="NCBI Taxonomy" id="196627"/>
    <lineage>
        <taxon>Bacteria</taxon>
        <taxon>Bacillati</taxon>
        <taxon>Actinomycetota</taxon>
        <taxon>Actinomycetes</taxon>
        <taxon>Mycobacteriales</taxon>
        <taxon>Corynebacteriaceae</taxon>
        <taxon>Corynebacterium</taxon>
    </lineage>
</organism>
<comment type="function">
    <text evidence="1">Catalyzes the reversible conversion of 2-phosphoglycerate (2-PG) into phosphoenolpyruvate (PEP). It is essential for the degradation of carbohydrates via glycolysis.</text>
</comment>
<comment type="catalytic activity">
    <reaction evidence="1">
        <text>(2R)-2-phosphoglycerate = phosphoenolpyruvate + H2O</text>
        <dbReference type="Rhea" id="RHEA:10164"/>
        <dbReference type="ChEBI" id="CHEBI:15377"/>
        <dbReference type="ChEBI" id="CHEBI:58289"/>
        <dbReference type="ChEBI" id="CHEBI:58702"/>
        <dbReference type="EC" id="4.2.1.11"/>
    </reaction>
</comment>
<comment type="cofactor">
    <cofactor evidence="1">
        <name>Mg(2+)</name>
        <dbReference type="ChEBI" id="CHEBI:18420"/>
    </cofactor>
    <text evidence="1">Binds a second Mg(2+) ion via substrate during catalysis.</text>
</comment>
<comment type="pathway">
    <text evidence="1">Carbohydrate degradation; glycolysis; pyruvate from D-glyceraldehyde 3-phosphate: step 4/5.</text>
</comment>
<comment type="subcellular location">
    <subcellularLocation>
        <location evidence="1">Cytoplasm</location>
    </subcellularLocation>
    <subcellularLocation>
        <location evidence="1">Secreted</location>
    </subcellularLocation>
    <subcellularLocation>
        <location evidence="1">Cell surface</location>
    </subcellularLocation>
    <text evidence="1">Fractions of enolase are present in both the cytoplasm and on the cell surface.</text>
</comment>
<comment type="similarity">
    <text evidence="1">Belongs to the enolase family.</text>
</comment>
<gene>
    <name evidence="1" type="primary">eno</name>
    <name type="ordered locus">Cgl0974</name>
    <name type="ordered locus">cg1111</name>
</gene>